<protein>
    <recommendedName>
        <fullName evidence="1">Sulfate/thiosulfate import ATP-binding protein CysA</fullName>
        <ecNumber evidence="1">7.3.2.3</ecNumber>
    </recommendedName>
    <alternativeName>
        <fullName evidence="1">Sulfate-transporting ATPase</fullName>
    </alternativeName>
</protein>
<accession>Q8XBJ8</accession>
<name>CYSA_ECO57</name>
<feature type="chain" id="PRO_0000092267" description="Sulfate/thiosulfate import ATP-binding protein CysA">
    <location>
        <begin position="1"/>
        <end position="365"/>
    </location>
</feature>
<feature type="domain" description="ABC transporter" evidence="1">
    <location>
        <begin position="3"/>
        <end position="237"/>
    </location>
</feature>
<feature type="binding site" evidence="1">
    <location>
        <begin position="35"/>
        <end position="42"/>
    </location>
    <ligand>
        <name>ATP</name>
        <dbReference type="ChEBI" id="CHEBI:30616"/>
    </ligand>
</feature>
<comment type="function">
    <text evidence="1">Part of the ABC transporter complex CysAWTP involved in sulfate/thiosulfate import. Responsible for energy coupling to the transport system.</text>
</comment>
<comment type="catalytic activity">
    <reaction evidence="1">
        <text>sulfate(out) + ATP + H2O = sulfate(in) + ADP + phosphate + H(+)</text>
        <dbReference type="Rhea" id="RHEA:10192"/>
        <dbReference type="ChEBI" id="CHEBI:15377"/>
        <dbReference type="ChEBI" id="CHEBI:15378"/>
        <dbReference type="ChEBI" id="CHEBI:16189"/>
        <dbReference type="ChEBI" id="CHEBI:30616"/>
        <dbReference type="ChEBI" id="CHEBI:43474"/>
        <dbReference type="ChEBI" id="CHEBI:456216"/>
        <dbReference type="EC" id="7.3.2.3"/>
    </reaction>
</comment>
<comment type="catalytic activity">
    <reaction evidence="1">
        <text>thiosulfate(out) + ATP + H2O = thiosulfate(in) + ADP + phosphate + H(+)</text>
        <dbReference type="Rhea" id="RHEA:29871"/>
        <dbReference type="ChEBI" id="CHEBI:15377"/>
        <dbReference type="ChEBI" id="CHEBI:15378"/>
        <dbReference type="ChEBI" id="CHEBI:30616"/>
        <dbReference type="ChEBI" id="CHEBI:33542"/>
        <dbReference type="ChEBI" id="CHEBI:43474"/>
        <dbReference type="ChEBI" id="CHEBI:456216"/>
        <dbReference type="EC" id="7.3.2.3"/>
    </reaction>
</comment>
<comment type="subunit">
    <text evidence="1">The complex is composed of two ATP-binding proteins (CysA), two transmembrane proteins (CysT and CysW) and a solute-binding protein (CysP).</text>
</comment>
<comment type="subcellular location">
    <subcellularLocation>
        <location evidence="1">Cell inner membrane</location>
        <topology evidence="1">Peripheral membrane protein</topology>
    </subcellularLocation>
</comment>
<comment type="similarity">
    <text evidence="1">Belongs to the ABC transporter superfamily. Sulfate/tungstate importer (TC 3.A.1.6) family.</text>
</comment>
<keyword id="KW-0067">ATP-binding</keyword>
<keyword id="KW-0997">Cell inner membrane</keyword>
<keyword id="KW-1003">Cell membrane</keyword>
<keyword id="KW-0472">Membrane</keyword>
<keyword id="KW-0547">Nucleotide-binding</keyword>
<keyword id="KW-1185">Reference proteome</keyword>
<keyword id="KW-0764">Sulfate transport</keyword>
<keyword id="KW-1278">Translocase</keyword>
<keyword id="KW-0813">Transport</keyword>
<gene>
    <name evidence="1" type="primary">cysA</name>
    <name type="ordered locus">Z3687</name>
    <name type="ordered locus">ECs3293</name>
</gene>
<organism>
    <name type="scientific">Escherichia coli O157:H7</name>
    <dbReference type="NCBI Taxonomy" id="83334"/>
    <lineage>
        <taxon>Bacteria</taxon>
        <taxon>Pseudomonadati</taxon>
        <taxon>Pseudomonadota</taxon>
        <taxon>Gammaproteobacteria</taxon>
        <taxon>Enterobacterales</taxon>
        <taxon>Enterobacteriaceae</taxon>
        <taxon>Escherichia</taxon>
    </lineage>
</organism>
<dbReference type="EC" id="7.3.2.3" evidence="1"/>
<dbReference type="EMBL" id="AE005174">
    <property type="protein sequence ID" value="AAG57540.1"/>
    <property type="molecule type" value="Genomic_DNA"/>
</dbReference>
<dbReference type="EMBL" id="BA000007">
    <property type="protein sequence ID" value="BAB36716.1"/>
    <property type="molecule type" value="Genomic_DNA"/>
</dbReference>
<dbReference type="PIR" id="E91040">
    <property type="entry name" value="E91040"/>
</dbReference>
<dbReference type="PIR" id="H85884">
    <property type="entry name" value="H85884"/>
</dbReference>
<dbReference type="RefSeq" id="NP_311320.1">
    <property type="nucleotide sequence ID" value="NC_002695.1"/>
</dbReference>
<dbReference type="RefSeq" id="WP_000021035.1">
    <property type="nucleotide sequence ID" value="NZ_VOAI01000001.1"/>
</dbReference>
<dbReference type="SMR" id="Q8XBJ8"/>
<dbReference type="STRING" id="155864.Z3687"/>
<dbReference type="GeneID" id="915512"/>
<dbReference type="KEGG" id="ece:Z3687"/>
<dbReference type="KEGG" id="ecs:ECs_3293"/>
<dbReference type="PATRIC" id="fig|386585.9.peg.3440"/>
<dbReference type="eggNOG" id="COG1118">
    <property type="taxonomic scope" value="Bacteria"/>
</dbReference>
<dbReference type="HOGENOM" id="CLU_000604_1_1_6"/>
<dbReference type="OMA" id="AAFKHMT"/>
<dbReference type="Proteomes" id="UP000000558">
    <property type="component" value="Chromosome"/>
</dbReference>
<dbReference type="Proteomes" id="UP000002519">
    <property type="component" value="Chromosome"/>
</dbReference>
<dbReference type="GO" id="GO:0043190">
    <property type="term" value="C:ATP-binding cassette (ABC) transporter complex"/>
    <property type="evidence" value="ECO:0007669"/>
    <property type="project" value="InterPro"/>
</dbReference>
<dbReference type="GO" id="GO:0015419">
    <property type="term" value="F:ABC-type sulfate transporter activity"/>
    <property type="evidence" value="ECO:0007669"/>
    <property type="project" value="InterPro"/>
</dbReference>
<dbReference type="GO" id="GO:0102025">
    <property type="term" value="F:ABC-type thiosulfate transporter activity"/>
    <property type="evidence" value="ECO:0007669"/>
    <property type="project" value="RHEA"/>
</dbReference>
<dbReference type="GO" id="GO:0005524">
    <property type="term" value="F:ATP binding"/>
    <property type="evidence" value="ECO:0007669"/>
    <property type="project" value="UniProtKB-KW"/>
</dbReference>
<dbReference type="GO" id="GO:0016887">
    <property type="term" value="F:ATP hydrolysis activity"/>
    <property type="evidence" value="ECO:0007669"/>
    <property type="project" value="InterPro"/>
</dbReference>
<dbReference type="CDD" id="cd03296">
    <property type="entry name" value="ABC_CysA_sulfate_importer"/>
    <property type="match status" value="1"/>
</dbReference>
<dbReference type="FunFam" id="3.40.50.300:FF:000227">
    <property type="entry name" value="Sulfate/thiosulfate import ATP-binding protein CysA"/>
    <property type="match status" value="1"/>
</dbReference>
<dbReference type="Gene3D" id="3.40.50.300">
    <property type="entry name" value="P-loop containing nucleotide triphosphate hydrolases"/>
    <property type="match status" value="1"/>
</dbReference>
<dbReference type="InterPro" id="IPR003593">
    <property type="entry name" value="AAA+_ATPase"/>
</dbReference>
<dbReference type="InterPro" id="IPR050093">
    <property type="entry name" value="ABC_SmlMolc_Importer"/>
</dbReference>
<dbReference type="InterPro" id="IPR003439">
    <property type="entry name" value="ABC_transporter-like_ATP-bd"/>
</dbReference>
<dbReference type="InterPro" id="IPR017871">
    <property type="entry name" value="ABC_transporter-like_CS"/>
</dbReference>
<dbReference type="InterPro" id="IPR008995">
    <property type="entry name" value="Mo/tungstate-bd_C_term_dom"/>
</dbReference>
<dbReference type="InterPro" id="IPR027417">
    <property type="entry name" value="P-loop_NTPase"/>
</dbReference>
<dbReference type="InterPro" id="IPR005666">
    <property type="entry name" value="Sulph_transpt1"/>
</dbReference>
<dbReference type="NCBIfam" id="TIGR00968">
    <property type="entry name" value="3a0106s01"/>
    <property type="match status" value="1"/>
</dbReference>
<dbReference type="NCBIfam" id="NF008105">
    <property type="entry name" value="PRK10851.1"/>
    <property type="match status" value="1"/>
</dbReference>
<dbReference type="PANTHER" id="PTHR42781">
    <property type="entry name" value="SPERMIDINE/PUTRESCINE IMPORT ATP-BINDING PROTEIN POTA"/>
    <property type="match status" value="1"/>
</dbReference>
<dbReference type="PANTHER" id="PTHR42781:SF4">
    <property type="entry name" value="SPERMIDINE_PUTRESCINE IMPORT ATP-BINDING PROTEIN POTA"/>
    <property type="match status" value="1"/>
</dbReference>
<dbReference type="Pfam" id="PF00005">
    <property type="entry name" value="ABC_tran"/>
    <property type="match status" value="1"/>
</dbReference>
<dbReference type="SMART" id="SM00382">
    <property type="entry name" value="AAA"/>
    <property type="match status" value="1"/>
</dbReference>
<dbReference type="SUPFAM" id="SSF50331">
    <property type="entry name" value="MOP-like"/>
    <property type="match status" value="1"/>
</dbReference>
<dbReference type="SUPFAM" id="SSF52540">
    <property type="entry name" value="P-loop containing nucleoside triphosphate hydrolases"/>
    <property type="match status" value="1"/>
</dbReference>
<dbReference type="PROSITE" id="PS00211">
    <property type="entry name" value="ABC_TRANSPORTER_1"/>
    <property type="match status" value="1"/>
</dbReference>
<dbReference type="PROSITE" id="PS50893">
    <property type="entry name" value="ABC_TRANSPORTER_2"/>
    <property type="match status" value="1"/>
</dbReference>
<dbReference type="PROSITE" id="PS51237">
    <property type="entry name" value="CYSA"/>
    <property type="match status" value="1"/>
</dbReference>
<sequence>MSIEIANIKKSFGRTQVLNDISLDIPSGQMVALLGPSGSGKTTLLRIIAGLEHQTSGHIRFHGTDVSRLHARDRKVGFVFQHYALFRHMTVFDNIAFGLTVLPRRERPNAAAIKAKVTKLLEMVQLAHLADRYPAQLSGGQKQRVALARALAVEPQILLLDEPFGALDAQVRKELRRWLRQLHEELKFTSVFVTHDQEEATEVADRVVVMSQGNIEQADAPDQVWREPATRFVLEFMGEVNRLQGTIRGGQFHVGAHRWPLGYTPAYQGPVDLFLRPWEVDISRRTSLDSPLPVQVLEASPKGHYTQLVVQPLGWYNEPLTVVMHGDDAPQRGERLFVGLQHARLYNGDERIEPRDEELALAQSA</sequence>
<reference key="1">
    <citation type="journal article" date="2001" name="Nature">
        <title>Genome sequence of enterohaemorrhagic Escherichia coli O157:H7.</title>
        <authorList>
            <person name="Perna N.T."/>
            <person name="Plunkett G. III"/>
            <person name="Burland V."/>
            <person name="Mau B."/>
            <person name="Glasner J.D."/>
            <person name="Rose D.J."/>
            <person name="Mayhew G.F."/>
            <person name="Evans P.S."/>
            <person name="Gregor J."/>
            <person name="Kirkpatrick H.A."/>
            <person name="Posfai G."/>
            <person name="Hackett J."/>
            <person name="Klink S."/>
            <person name="Boutin A."/>
            <person name="Shao Y."/>
            <person name="Miller L."/>
            <person name="Grotbeck E.J."/>
            <person name="Davis N.W."/>
            <person name="Lim A."/>
            <person name="Dimalanta E.T."/>
            <person name="Potamousis K."/>
            <person name="Apodaca J."/>
            <person name="Anantharaman T.S."/>
            <person name="Lin J."/>
            <person name="Yen G."/>
            <person name="Schwartz D.C."/>
            <person name="Welch R.A."/>
            <person name="Blattner F.R."/>
        </authorList>
    </citation>
    <scope>NUCLEOTIDE SEQUENCE [LARGE SCALE GENOMIC DNA]</scope>
    <source>
        <strain>O157:H7 / EDL933 / ATCC 700927 / EHEC</strain>
    </source>
</reference>
<reference key="2">
    <citation type="journal article" date="2001" name="DNA Res.">
        <title>Complete genome sequence of enterohemorrhagic Escherichia coli O157:H7 and genomic comparison with a laboratory strain K-12.</title>
        <authorList>
            <person name="Hayashi T."/>
            <person name="Makino K."/>
            <person name="Ohnishi M."/>
            <person name="Kurokawa K."/>
            <person name="Ishii K."/>
            <person name="Yokoyama K."/>
            <person name="Han C.-G."/>
            <person name="Ohtsubo E."/>
            <person name="Nakayama K."/>
            <person name="Murata T."/>
            <person name="Tanaka M."/>
            <person name="Tobe T."/>
            <person name="Iida T."/>
            <person name="Takami H."/>
            <person name="Honda T."/>
            <person name="Sasakawa C."/>
            <person name="Ogasawara N."/>
            <person name="Yasunaga T."/>
            <person name="Kuhara S."/>
            <person name="Shiba T."/>
            <person name="Hattori M."/>
            <person name="Shinagawa H."/>
        </authorList>
    </citation>
    <scope>NUCLEOTIDE SEQUENCE [LARGE SCALE GENOMIC DNA]</scope>
    <source>
        <strain>O157:H7 / Sakai / RIMD 0509952 / EHEC</strain>
    </source>
</reference>
<proteinExistence type="inferred from homology"/>
<evidence type="ECO:0000255" key="1">
    <source>
        <dbReference type="HAMAP-Rule" id="MF_01701"/>
    </source>
</evidence>